<protein>
    <recommendedName>
        <fullName evidence="1">tRNA(Ile)-lysidine synthase</fullName>
        <ecNumber evidence="1">6.3.4.19</ecNumber>
    </recommendedName>
    <alternativeName>
        <fullName evidence="1">tRNA(Ile)-2-lysyl-cytidine synthase</fullName>
    </alternativeName>
    <alternativeName>
        <fullName evidence="1">tRNA(Ile)-lysidine synthetase</fullName>
    </alternativeName>
</protein>
<accession>B0BVY4</accession>
<dbReference type="EC" id="6.3.4.19" evidence="1"/>
<dbReference type="EMBL" id="CP000766">
    <property type="protein sequence ID" value="ABY72010.1"/>
    <property type="molecule type" value="Genomic_DNA"/>
</dbReference>
<dbReference type="RefSeq" id="WP_012150294.1">
    <property type="nucleotide sequence ID" value="NC_010263.3"/>
</dbReference>
<dbReference type="SMR" id="B0BVY4"/>
<dbReference type="GeneID" id="79936869"/>
<dbReference type="KEGG" id="rrj:RrIowa_0088"/>
<dbReference type="eggNOG" id="COG0037">
    <property type="taxonomic scope" value="Bacteria"/>
</dbReference>
<dbReference type="HOGENOM" id="CLU_018869_3_2_5"/>
<dbReference type="Proteomes" id="UP000000796">
    <property type="component" value="Chromosome"/>
</dbReference>
<dbReference type="GO" id="GO:0005737">
    <property type="term" value="C:cytoplasm"/>
    <property type="evidence" value="ECO:0007669"/>
    <property type="project" value="UniProtKB-SubCell"/>
</dbReference>
<dbReference type="GO" id="GO:0005524">
    <property type="term" value="F:ATP binding"/>
    <property type="evidence" value="ECO:0007669"/>
    <property type="project" value="UniProtKB-UniRule"/>
</dbReference>
<dbReference type="GO" id="GO:0032267">
    <property type="term" value="F:tRNA(Ile)-lysidine synthase activity"/>
    <property type="evidence" value="ECO:0007669"/>
    <property type="project" value="UniProtKB-EC"/>
</dbReference>
<dbReference type="GO" id="GO:0006400">
    <property type="term" value="P:tRNA modification"/>
    <property type="evidence" value="ECO:0007669"/>
    <property type="project" value="UniProtKB-UniRule"/>
</dbReference>
<dbReference type="CDD" id="cd01992">
    <property type="entry name" value="TilS_N"/>
    <property type="match status" value="1"/>
</dbReference>
<dbReference type="Gene3D" id="3.40.50.620">
    <property type="entry name" value="HUPs"/>
    <property type="match status" value="1"/>
</dbReference>
<dbReference type="HAMAP" id="MF_01161">
    <property type="entry name" value="tRNA_Ile_lys_synt"/>
    <property type="match status" value="1"/>
</dbReference>
<dbReference type="InterPro" id="IPR014729">
    <property type="entry name" value="Rossmann-like_a/b/a_fold"/>
</dbReference>
<dbReference type="InterPro" id="IPR005728">
    <property type="entry name" value="RPE1"/>
</dbReference>
<dbReference type="InterPro" id="IPR011063">
    <property type="entry name" value="TilS/TtcA_N"/>
</dbReference>
<dbReference type="InterPro" id="IPR012094">
    <property type="entry name" value="tRNA_Ile_lys_synt"/>
</dbReference>
<dbReference type="InterPro" id="IPR012795">
    <property type="entry name" value="tRNA_Ile_lys_synt_N"/>
</dbReference>
<dbReference type="NCBIfam" id="TIGR02432">
    <property type="entry name" value="lysidine_TilS_N"/>
    <property type="match status" value="1"/>
</dbReference>
<dbReference type="NCBIfam" id="TIGR01045">
    <property type="entry name" value="RPE1"/>
    <property type="match status" value="1"/>
</dbReference>
<dbReference type="PANTHER" id="PTHR43033">
    <property type="entry name" value="TRNA(ILE)-LYSIDINE SYNTHASE-RELATED"/>
    <property type="match status" value="1"/>
</dbReference>
<dbReference type="PANTHER" id="PTHR43033:SF1">
    <property type="entry name" value="TRNA(ILE)-LYSIDINE SYNTHASE-RELATED"/>
    <property type="match status" value="1"/>
</dbReference>
<dbReference type="Pfam" id="PF01171">
    <property type="entry name" value="ATP_bind_3"/>
    <property type="match status" value="1"/>
</dbReference>
<dbReference type="SUPFAM" id="SSF52402">
    <property type="entry name" value="Adenine nucleotide alpha hydrolases-like"/>
    <property type="match status" value="1"/>
</dbReference>
<feature type="chain" id="PRO_1000085368" description="tRNA(Ile)-lysidine synthase">
    <location>
        <begin position="1"/>
        <end position="478"/>
    </location>
</feature>
<feature type="binding site" evidence="1">
    <location>
        <begin position="27"/>
        <end position="32"/>
    </location>
    <ligand>
        <name>ATP</name>
        <dbReference type="ChEBI" id="CHEBI:30616"/>
    </ligand>
</feature>
<keyword id="KW-0067">ATP-binding</keyword>
<keyword id="KW-0963">Cytoplasm</keyword>
<keyword id="KW-0436">Ligase</keyword>
<keyword id="KW-0547">Nucleotide-binding</keyword>
<keyword id="KW-0819">tRNA processing</keyword>
<proteinExistence type="inferred from homology"/>
<comment type="function">
    <text evidence="1">Ligates lysine onto the cytidine present at position 34 of the AUA codon-specific tRNA(Ile) that contains the anticodon CAU, in an ATP-dependent manner. Cytidine is converted to lysidine, thus changing the amino acid specificity of the tRNA from methionine to isoleucine.</text>
</comment>
<comment type="catalytic activity">
    <reaction evidence="1">
        <text>cytidine(34) in tRNA(Ile2) + L-lysine + ATP = lysidine(34) in tRNA(Ile2) + AMP + diphosphate + H(+)</text>
        <dbReference type="Rhea" id="RHEA:43744"/>
        <dbReference type="Rhea" id="RHEA-COMP:10625"/>
        <dbReference type="Rhea" id="RHEA-COMP:10670"/>
        <dbReference type="ChEBI" id="CHEBI:15378"/>
        <dbReference type="ChEBI" id="CHEBI:30616"/>
        <dbReference type="ChEBI" id="CHEBI:32551"/>
        <dbReference type="ChEBI" id="CHEBI:33019"/>
        <dbReference type="ChEBI" id="CHEBI:82748"/>
        <dbReference type="ChEBI" id="CHEBI:83665"/>
        <dbReference type="ChEBI" id="CHEBI:456215"/>
        <dbReference type="EC" id="6.3.4.19"/>
    </reaction>
</comment>
<comment type="subcellular location">
    <subcellularLocation>
        <location evidence="1">Cytoplasm</location>
    </subcellularLocation>
</comment>
<comment type="domain">
    <text>The N-terminal region contains the highly conserved SGGXDS motif, predicted to be a P-loop motif involved in ATP binding.</text>
</comment>
<comment type="similarity">
    <text evidence="1">Belongs to the tRNA(Ile)-lysidine synthase family.</text>
</comment>
<evidence type="ECO:0000255" key="1">
    <source>
        <dbReference type="HAMAP-Rule" id="MF_01161"/>
    </source>
</evidence>
<sequence>MLYEKFEYNINNLIGNFSLSKISIAVSGGSDSVALLYLANIWAEKNNIELFVISVDHNLREQSKQETHYIQNISNSLNRKHYSLSFDHQNNFSNLQERAREGRYDLMTNLCLELDILVLLTAHHEDDYVENFCLRLERNSGIFGLSSSNINWYNNIHIIRPLYNIPKSELVEYLVSHNIKWFEDESNSSDKYRRNVIRQKLAKGADYIRHFSKPVYREEFKGDTERSTAAYTSVREDASTGTASKLSLEAKCGKMSKAAIISQQLKTNKRIENEFKPELISAIAEAVKIFEYGFAFLDLVKFDKFSNEVKVQIINFLLIIISGQSRAARFYSVEPILKLITQDVNFKNTLHGCIIKRIQNELLIYREFGKKLPESKILLDKSVIWDNRFCITKNQEAPNCFVTHLSLKDYKIIKKQLDLEPLKNLSCKNHNAVLLTLPIIKILEKVIAIPHISYYDNDMWNFEVSFSPNFVSRFTHFC</sequence>
<organism>
    <name type="scientific">Rickettsia rickettsii (strain Iowa)</name>
    <dbReference type="NCBI Taxonomy" id="452659"/>
    <lineage>
        <taxon>Bacteria</taxon>
        <taxon>Pseudomonadati</taxon>
        <taxon>Pseudomonadota</taxon>
        <taxon>Alphaproteobacteria</taxon>
        <taxon>Rickettsiales</taxon>
        <taxon>Rickettsiaceae</taxon>
        <taxon>Rickettsieae</taxon>
        <taxon>Rickettsia</taxon>
        <taxon>spotted fever group</taxon>
    </lineage>
</organism>
<reference key="1">
    <citation type="journal article" date="2008" name="Infect. Immun.">
        <title>Genomic comparison of virulent Rickettsia rickettsii Sheila Smith and avirulent Rickettsia rickettsii Iowa.</title>
        <authorList>
            <person name="Ellison D.W."/>
            <person name="Clark T.R."/>
            <person name="Sturdevant D.E."/>
            <person name="Virtaneva K."/>
            <person name="Porcella S.F."/>
            <person name="Hackstadt T."/>
        </authorList>
    </citation>
    <scope>NUCLEOTIDE SEQUENCE [LARGE SCALE GENOMIC DNA]</scope>
    <source>
        <strain>Iowa</strain>
    </source>
</reference>
<gene>
    <name evidence="1" type="primary">tilS</name>
    <name type="ordered locus">RrIowa_0088</name>
</gene>
<name>TILS_RICRO</name>